<reference key="1">
    <citation type="journal article" date="1998" name="Nature">
        <title>The genome sequence of Rickettsia prowazekii and the origin of mitochondria.</title>
        <authorList>
            <person name="Andersson S.G.E."/>
            <person name="Zomorodipour A."/>
            <person name="Andersson J.O."/>
            <person name="Sicheritz-Ponten T."/>
            <person name="Alsmark U.C.M."/>
            <person name="Podowski R.M."/>
            <person name="Naeslund A.K."/>
            <person name="Eriksson A.-S."/>
            <person name="Winkler H.H."/>
            <person name="Kurland C.G."/>
        </authorList>
    </citation>
    <scope>NUCLEOTIDE SEQUENCE [LARGE SCALE GENOMIC DNA]</scope>
    <source>
        <strain>Madrid E</strain>
    </source>
</reference>
<sequence length="129" mass="15259">MTIRKFHYLILFITIIAICSLFRIKDRVSTLNYQLRSVIKQINSENNNINILKAEQAYLLLPTRLEKLAAAYLKLEIVKSYQMINDPLAPNIEQNIKFNHNISISKSNKWRYKRIMNNKYIQTVSSRVK</sequence>
<name>Y568_RICPR</name>
<comment type="subcellular location">
    <subcellularLocation>
        <location evidence="2">Membrane</location>
        <topology evidence="2">Single-pass membrane protein</topology>
    </subcellularLocation>
</comment>
<gene>
    <name type="ordered locus">RP568</name>
</gene>
<accession>Q9ZCY3</accession>
<protein>
    <recommendedName>
        <fullName>Uncharacterized protein RP568</fullName>
    </recommendedName>
</protein>
<dbReference type="EMBL" id="AJ235272">
    <property type="protein sequence ID" value="CAA15016.1"/>
    <property type="molecule type" value="Genomic_DNA"/>
</dbReference>
<dbReference type="PIR" id="F71661">
    <property type="entry name" value="F71661"/>
</dbReference>
<dbReference type="RefSeq" id="NP_220940.1">
    <property type="nucleotide sequence ID" value="NC_000963.1"/>
</dbReference>
<dbReference type="SMR" id="Q9ZCY3"/>
<dbReference type="STRING" id="272947.gene:17555648"/>
<dbReference type="EnsemblBacteria" id="CAA15016">
    <property type="protein sequence ID" value="CAA15016"/>
    <property type="gene ID" value="CAA15016"/>
</dbReference>
<dbReference type="KEGG" id="rpr:RP568"/>
<dbReference type="PATRIC" id="fig|272947.5.peg.584"/>
<dbReference type="eggNOG" id="COG5462">
    <property type="taxonomic scope" value="Bacteria"/>
</dbReference>
<dbReference type="HOGENOM" id="CLU_125468_0_0_5"/>
<dbReference type="OrthoDB" id="7165680at2"/>
<dbReference type="Proteomes" id="UP000002480">
    <property type="component" value="Chromosome"/>
</dbReference>
<dbReference type="GO" id="GO:0016020">
    <property type="term" value="C:membrane"/>
    <property type="evidence" value="ECO:0007669"/>
    <property type="project" value="UniProtKB-SubCell"/>
</dbReference>
<organism>
    <name type="scientific">Rickettsia prowazekii (strain Madrid E)</name>
    <dbReference type="NCBI Taxonomy" id="272947"/>
    <lineage>
        <taxon>Bacteria</taxon>
        <taxon>Pseudomonadati</taxon>
        <taxon>Pseudomonadota</taxon>
        <taxon>Alphaproteobacteria</taxon>
        <taxon>Rickettsiales</taxon>
        <taxon>Rickettsiaceae</taxon>
        <taxon>Rickettsieae</taxon>
        <taxon>Rickettsia</taxon>
        <taxon>typhus group</taxon>
    </lineage>
</organism>
<keyword id="KW-0472">Membrane</keyword>
<keyword id="KW-1185">Reference proteome</keyword>
<keyword id="KW-0812">Transmembrane</keyword>
<keyword id="KW-1133">Transmembrane helix</keyword>
<evidence type="ECO:0000255" key="1"/>
<evidence type="ECO:0000305" key="2"/>
<proteinExistence type="predicted"/>
<feature type="chain" id="PRO_0000101397" description="Uncharacterized protein RP568">
    <location>
        <begin position="1"/>
        <end position="129"/>
    </location>
</feature>
<feature type="transmembrane region" description="Helical" evidence="1">
    <location>
        <begin position="8"/>
        <end position="24"/>
    </location>
</feature>